<name>UVRC_CHLTE</name>
<accession>Q8KBI0</accession>
<proteinExistence type="inferred from homology"/>
<sequence length="626" mass="70341">MSDTAAAPDKTAKSALAEKLATLPTSPGVYRFSNAAGTVIYVGKARNLRNRVRSYFNSQGRQPGKTAVMVSHIADLNVIITSSEVEALILENNLIKELKPRYNVNLKDDKSYPWLVITNERFPRIFLTRQVRRDGSLYFGPYTEASQLRLILDLIGSIFPVRSCKYKLTEEAVASGRYRVCLDYHIHKCKGPCEGLQSEEEYQAMIREIVTLLKGKTSALLRDLSAEMQKKAKELKFEEAAALKAQIEGLKRYAERQKIVSTEAIDRDVFAVAAGEDDACGVVFRIREGKLIGSRHTYLSNTGNTPLPNLLASFVEHYYLETPDLIPQELMLQAELPEEELEALRQLLSSRQTERRQVRFTVPRIGEKAHLIAMCLDNAKHHLHEFMVQKKLRGEIARKSPALESLKQVLHLGKLPERIECFDNSHFQGTDYVSSMVTFVSGKPKKSDYRKFRLKSFEGSDDYAAMREAVTRRYGGSLAGELPLPDLVLIDGGKGQVNVAWQVLQELGLDLPVAGLAKRLEEIYVPNEPDPYNLPKTSPALKLLQQLRDEAHRFAITYHRKLRSDRTIRTELTGIKGVGEKSAEKLLKHFGSVESVSKASIDELSAVAGRKTAESIYRYFNAGDAP</sequence>
<organism>
    <name type="scientific">Chlorobaculum tepidum (strain ATCC 49652 / DSM 12025 / NBRC 103806 / TLS)</name>
    <name type="common">Chlorobium tepidum</name>
    <dbReference type="NCBI Taxonomy" id="194439"/>
    <lineage>
        <taxon>Bacteria</taxon>
        <taxon>Pseudomonadati</taxon>
        <taxon>Chlorobiota</taxon>
        <taxon>Chlorobiia</taxon>
        <taxon>Chlorobiales</taxon>
        <taxon>Chlorobiaceae</taxon>
        <taxon>Chlorobaculum</taxon>
    </lineage>
</organism>
<comment type="function">
    <text evidence="1">The UvrABC repair system catalyzes the recognition and processing of DNA lesions. UvrC both incises the 5' and 3' sides of the lesion. The N-terminal half is responsible for the 3' incision and the C-terminal half is responsible for the 5' incision.</text>
</comment>
<comment type="subunit">
    <text evidence="1">Interacts with UvrB in an incision complex.</text>
</comment>
<comment type="subcellular location">
    <subcellularLocation>
        <location evidence="1">Cytoplasm</location>
    </subcellularLocation>
</comment>
<comment type="similarity">
    <text evidence="1">Belongs to the UvrC family.</text>
</comment>
<dbReference type="EMBL" id="AE006470">
    <property type="protein sequence ID" value="AAM73028.1"/>
    <property type="molecule type" value="Genomic_DNA"/>
</dbReference>
<dbReference type="RefSeq" id="NP_662686.1">
    <property type="nucleotide sequence ID" value="NC_002932.3"/>
</dbReference>
<dbReference type="RefSeq" id="WP_010933467.1">
    <property type="nucleotide sequence ID" value="NC_002932.3"/>
</dbReference>
<dbReference type="SMR" id="Q8KBI0"/>
<dbReference type="STRING" id="194439.CT1807"/>
<dbReference type="EnsemblBacteria" id="AAM73028">
    <property type="protein sequence ID" value="AAM73028"/>
    <property type="gene ID" value="CT1807"/>
</dbReference>
<dbReference type="KEGG" id="cte:CT1807"/>
<dbReference type="PATRIC" id="fig|194439.7.peg.1640"/>
<dbReference type="eggNOG" id="COG0322">
    <property type="taxonomic scope" value="Bacteria"/>
</dbReference>
<dbReference type="HOGENOM" id="CLU_014841_3_2_10"/>
<dbReference type="OrthoDB" id="9804933at2"/>
<dbReference type="Proteomes" id="UP000001007">
    <property type="component" value="Chromosome"/>
</dbReference>
<dbReference type="GO" id="GO:0005737">
    <property type="term" value="C:cytoplasm"/>
    <property type="evidence" value="ECO:0007669"/>
    <property type="project" value="UniProtKB-SubCell"/>
</dbReference>
<dbReference type="GO" id="GO:0009380">
    <property type="term" value="C:excinuclease repair complex"/>
    <property type="evidence" value="ECO:0007669"/>
    <property type="project" value="InterPro"/>
</dbReference>
<dbReference type="GO" id="GO:0003677">
    <property type="term" value="F:DNA binding"/>
    <property type="evidence" value="ECO:0007669"/>
    <property type="project" value="UniProtKB-UniRule"/>
</dbReference>
<dbReference type="GO" id="GO:0009381">
    <property type="term" value="F:excinuclease ABC activity"/>
    <property type="evidence" value="ECO:0007669"/>
    <property type="project" value="UniProtKB-UniRule"/>
</dbReference>
<dbReference type="GO" id="GO:0006289">
    <property type="term" value="P:nucleotide-excision repair"/>
    <property type="evidence" value="ECO:0007669"/>
    <property type="project" value="UniProtKB-UniRule"/>
</dbReference>
<dbReference type="GO" id="GO:0009432">
    <property type="term" value="P:SOS response"/>
    <property type="evidence" value="ECO:0007669"/>
    <property type="project" value="UniProtKB-UniRule"/>
</dbReference>
<dbReference type="CDD" id="cd10434">
    <property type="entry name" value="GIY-YIG_UvrC_Cho"/>
    <property type="match status" value="1"/>
</dbReference>
<dbReference type="FunFam" id="3.30.420.340:FF:000004">
    <property type="entry name" value="UvrABC system protein C"/>
    <property type="match status" value="1"/>
</dbReference>
<dbReference type="FunFam" id="3.40.1440.10:FF:000001">
    <property type="entry name" value="UvrABC system protein C"/>
    <property type="match status" value="1"/>
</dbReference>
<dbReference type="Gene3D" id="1.10.150.20">
    <property type="entry name" value="5' to 3' exonuclease, C-terminal subdomain"/>
    <property type="match status" value="1"/>
</dbReference>
<dbReference type="Gene3D" id="3.40.1440.10">
    <property type="entry name" value="GIY-YIG endonuclease"/>
    <property type="match status" value="1"/>
</dbReference>
<dbReference type="Gene3D" id="4.10.860.10">
    <property type="entry name" value="UVR domain"/>
    <property type="match status" value="1"/>
</dbReference>
<dbReference type="Gene3D" id="3.30.420.340">
    <property type="entry name" value="UvrC, RNAse H endonuclease domain"/>
    <property type="match status" value="1"/>
</dbReference>
<dbReference type="HAMAP" id="MF_00203">
    <property type="entry name" value="UvrC"/>
    <property type="match status" value="1"/>
</dbReference>
<dbReference type="InterPro" id="IPR000305">
    <property type="entry name" value="GIY-YIG_endonuc"/>
</dbReference>
<dbReference type="InterPro" id="IPR035901">
    <property type="entry name" value="GIY-YIG_endonuc_sf"/>
</dbReference>
<dbReference type="InterPro" id="IPR047296">
    <property type="entry name" value="GIY-YIG_UvrC_Cho"/>
</dbReference>
<dbReference type="InterPro" id="IPR003583">
    <property type="entry name" value="Hlx-hairpin-Hlx_DNA-bd_motif"/>
</dbReference>
<dbReference type="InterPro" id="IPR010994">
    <property type="entry name" value="RuvA_2-like"/>
</dbReference>
<dbReference type="InterPro" id="IPR001943">
    <property type="entry name" value="UVR_dom"/>
</dbReference>
<dbReference type="InterPro" id="IPR036876">
    <property type="entry name" value="UVR_dom_sf"/>
</dbReference>
<dbReference type="InterPro" id="IPR050066">
    <property type="entry name" value="UvrABC_protein_C"/>
</dbReference>
<dbReference type="InterPro" id="IPR004791">
    <property type="entry name" value="UvrC"/>
</dbReference>
<dbReference type="InterPro" id="IPR001162">
    <property type="entry name" value="UvrC_RNase_H_dom"/>
</dbReference>
<dbReference type="InterPro" id="IPR038476">
    <property type="entry name" value="UvrC_RNase_H_dom_sf"/>
</dbReference>
<dbReference type="NCBIfam" id="TIGR00194">
    <property type="entry name" value="uvrC"/>
    <property type="match status" value="1"/>
</dbReference>
<dbReference type="PANTHER" id="PTHR30562:SF1">
    <property type="entry name" value="UVRABC SYSTEM PROTEIN C"/>
    <property type="match status" value="1"/>
</dbReference>
<dbReference type="PANTHER" id="PTHR30562">
    <property type="entry name" value="UVRC/OXIDOREDUCTASE"/>
    <property type="match status" value="1"/>
</dbReference>
<dbReference type="Pfam" id="PF01541">
    <property type="entry name" value="GIY-YIG"/>
    <property type="match status" value="1"/>
</dbReference>
<dbReference type="Pfam" id="PF14520">
    <property type="entry name" value="HHH_5"/>
    <property type="match status" value="1"/>
</dbReference>
<dbReference type="Pfam" id="PF22920">
    <property type="entry name" value="UvrC_RNaseH"/>
    <property type="match status" value="1"/>
</dbReference>
<dbReference type="Pfam" id="PF08459">
    <property type="entry name" value="UvrC_RNaseH_dom"/>
    <property type="match status" value="1"/>
</dbReference>
<dbReference type="SMART" id="SM00465">
    <property type="entry name" value="GIYc"/>
    <property type="match status" value="1"/>
</dbReference>
<dbReference type="SMART" id="SM00278">
    <property type="entry name" value="HhH1"/>
    <property type="match status" value="2"/>
</dbReference>
<dbReference type="SUPFAM" id="SSF46600">
    <property type="entry name" value="C-terminal UvrC-binding domain of UvrB"/>
    <property type="match status" value="1"/>
</dbReference>
<dbReference type="SUPFAM" id="SSF82771">
    <property type="entry name" value="GIY-YIG endonuclease"/>
    <property type="match status" value="1"/>
</dbReference>
<dbReference type="SUPFAM" id="SSF47781">
    <property type="entry name" value="RuvA domain 2-like"/>
    <property type="match status" value="1"/>
</dbReference>
<dbReference type="PROSITE" id="PS50164">
    <property type="entry name" value="GIY_YIG"/>
    <property type="match status" value="1"/>
</dbReference>
<dbReference type="PROSITE" id="PS50151">
    <property type="entry name" value="UVR"/>
    <property type="match status" value="1"/>
</dbReference>
<dbReference type="PROSITE" id="PS50165">
    <property type="entry name" value="UVRC"/>
    <property type="match status" value="1"/>
</dbReference>
<reference key="1">
    <citation type="journal article" date="2002" name="Proc. Natl. Acad. Sci. U.S.A.">
        <title>The complete genome sequence of Chlorobium tepidum TLS, a photosynthetic, anaerobic, green-sulfur bacterium.</title>
        <authorList>
            <person name="Eisen J.A."/>
            <person name="Nelson K.E."/>
            <person name="Paulsen I.T."/>
            <person name="Heidelberg J.F."/>
            <person name="Wu M."/>
            <person name="Dodson R.J."/>
            <person name="DeBoy R.T."/>
            <person name="Gwinn M.L."/>
            <person name="Nelson W.C."/>
            <person name="Haft D.H."/>
            <person name="Hickey E.K."/>
            <person name="Peterson J.D."/>
            <person name="Durkin A.S."/>
            <person name="Kolonay J.F."/>
            <person name="Yang F."/>
            <person name="Holt I.E."/>
            <person name="Umayam L.A."/>
            <person name="Mason T.M."/>
            <person name="Brenner M."/>
            <person name="Shea T.P."/>
            <person name="Parksey D.S."/>
            <person name="Nierman W.C."/>
            <person name="Feldblyum T.V."/>
            <person name="Hansen C.L."/>
            <person name="Craven M.B."/>
            <person name="Radune D."/>
            <person name="Vamathevan J.J."/>
            <person name="Khouri H.M."/>
            <person name="White O."/>
            <person name="Gruber T.M."/>
            <person name="Ketchum K.A."/>
            <person name="Venter J.C."/>
            <person name="Tettelin H."/>
            <person name="Bryant D.A."/>
            <person name="Fraser C.M."/>
        </authorList>
    </citation>
    <scope>NUCLEOTIDE SEQUENCE [LARGE SCALE GENOMIC DNA]</scope>
    <source>
        <strain>ATCC 49652 / DSM 12025 / NBRC 103806 / TLS</strain>
    </source>
</reference>
<keyword id="KW-0963">Cytoplasm</keyword>
<keyword id="KW-0227">DNA damage</keyword>
<keyword id="KW-0228">DNA excision</keyword>
<keyword id="KW-0234">DNA repair</keyword>
<keyword id="KW-0267">Excision nuclease</keyword>
<keyword id="KW-1185">Reference proteome</keyword>
<keyword id="KW-0742">SOS response</keyword>
<protein>
    <recommendedName>
        <fullName evidence="1">UvrABC system protein C</fullName>
        <shortName evidence="1">Protein UvrC</shortName>
    </recommendedName>
    <alternativeName>
        <fullName evidence="1">Excinuclease ABC subunit C</fullName>
    </alternativeName>
</protein>
<gene>
    <name evidence="1" type="primary">uvrC</name>
    <name type="ordered locus">CT1807</name>
</gene>
<evidence type="ECO:0000255" key="1">
    <source>
        <dbReference type="HAMAP-Rule" id="MF_00203"/>
    </source>
</evidence>
<feature type="chain" id="PRO_0000138295" description="UvrABC system protein C">
    <location>
        <begin position="1"/>
        <end position="626"/>
    </location>
</feature>
<feature type="domain" description="GIY-YIG" evidence="1">
    <location>
        <begin position="25"/>
        <end position="104"/>
    </location>
</feature>
<feature type="domain" description="UVR" evidence="1">
    <location>
        <begin position="218"/>
        <end position="253"/>
    </location>
</feature>